<feature type="chain" id="PRO_0000099038" description="Tryptophan synthase beta chain">
    <location>
        <begin position="1"/>
        <end position="404"/>
    </location>
</feature>
<feature type="modified residue" description="N6-(pyridoxal phosphate)lysine" evidence="1">
    <location>
        <position position="98"/>
    </location>
</feature>
<accession>Q60179</accession>
<proteinExistence type="inferred from homology"/>
<gene>
    <name type="primary">trpB</name>
    <name type="ordered locus">MJ1037</name>
</gene>
<protein>
    <recommendedName>
        <fullName>Tryptophan synthase beta chain</fullName>
        <ecNumber>4.2.1.20</ecNumber>
    </recommendedName>
</protein>
<comment type="function">
    <text evidence="1">The beta subunit is responsible for the synthesis of L-tryptophan from indole and L-serine.</text>
</comment>
<comment type="catalytic activity">
    <reaction>
        <text>(1S,2R)-1-C-(indol-3-yl)glycerol 3-phosphate + L-serine = D-glyceraldehyde 3-phosphate + L-tryptophan + H2O</text>
        <dbReference type="Rhea" id="RHEA:10532"/>
        <dbReference type="ChEBI" id="CHEBI:15377"/>
        <dbReference type="ChEBI" id="CHEBI:33384"/>
        <dbReference type="ChEBI" id="CHEBI:57912"/>
        <dbReference type="ChEBI" id="CHEBI:58866"/>
        <dbReference type="ChEBI" id="CHEBI:59776"/>
        <dbReference type="EC" id="4.2.1.20"/>
    </reaction>
</comment>
<comment type="cofactor">
    <cofactor evidence="1">
        <name>pyridoxal 5'-phosphate</name>
        <dbReference type="ChEBI" id="CHEBI:597326"/>
    </cofactor>
</comment>
<comment type="pathway">
    <text>Amino-acid biosynthesis; L-tryptophan biosynthesis; L-tryptophan from chorismate: step 5/5.</text>
</comment>
<comment type="subunit">
    <text evidence="1">Tetramer of two alpha and two beta chains.</text>
</comment>
<comment type="similarity">
    <text evidence="2">Belongs to the TrpB family.</text>
</comment>
<sequence>MSILKKYKDMYPDENGKFGIYGGKFVPETLMPAIAELEEAFKRFWINNEGNFREEFYALLRDYVGRPTPLYYAERLSEELGCKVYLKREDLAHLGAHKINNALGQALLAKKMGKKRVIAETGAGQHGVATAAACAKLGLECIIYMGAKDVERQKLNVFRMELMGAKVIPVFGGSQTLKDAVNEALRDWTTNVRTTYYLLGSALGPHPYPMMVREFQRVIGKELKEQILEKEGRLPDVIVACVGGGSNAIGAFYEFLDDDVELYAVEAGGKGIETGMHGASLCAGEVGVLHGAKIYVKEDEFGQIEESYSISAGLDYPGVGPELSFLKDEGRIKAVCVTDDEALEAFQLLCRLEGILPALESSHALAYAVKLADKLDKDDIMVINLSGRGDKDVQTVAKALGREI</sequence>
<organism>
    <name type="scientific">Methanocaldococcus jannaschii (strain ATCC 43067 / DSM 2661 / JAL-1 / JCM 10045 / NBRC 100440)</name>
    <name type="common">Methanococcus jannaschii</name>
    <dbReference type="NCBI Taxonomy" id="243232"/>
    <lineage>
        <taxon>Archaea</taxon>
        <taxon>Methanobacteriati</taxon>
        <taxon>Methanobacteriota</taxon>
        <taxon>Methanomada group</taxon>
        <taxon>Methanococci</taxon>
        <taxon>Methanococcales</taxon>
        <taxon>Methanocaldococcaceae</taxon>
        <taxon>Methanocaldococcus</taxon>
    </lineage>
</organism>
<reference key="1">
    <citation type="journal article" date="1996" name="Science">
        <title>Complete genome sequence of the methanogenic archaeon, Methanococcus jannaschii.</title>
        <authorList>
            <person name="Bult C.J."/>
            <person name="White O."/>
            <person name="Olsen G.J."/>
            <person name="Zhou L."/>
            <person name="Fleischmann R.D."/>
            <person name="Sutton G.G."/>
            <person name="Blake J.A."/>
            <person name="FitzGerald L.M."/>
            <person name="Clayton R.A."/>
            <person name="Gocayne J.D."/>
            <person name="Kerlavage A.R."/>
            <person name="Dougherty B.A."/>
            <person name="Tomb J.-F."/>
            <person name="Adams M.D."/>
            <person name="Reich C.I."/>
            <person name="Overbeek R."/>
            <person name="Kirkness E.F."/>
            <person name="Weinstock K.G."/>
            <person name="Merrick J.M."/>
            <person name="Glodek A."/>
            <person name="Scott J.L."/>
            <person name="Geoghagen N.S.M."/>
            <person name="Weidman J.F."/>
            <person name="Fuhrmann J.L."/>
            <person name="Nguyen D."/>
            <person name="Utterback T.R."/>
            <person name="Kelley J.M."/>
            <person name="Peterson J.D."/>
            <person name="Sadow P.W."/>
            <person name="Hanna M.C."/>
            <person name="Cotton M.D."/>
            <person name="Roberts K.M."/>
            <person name="Hurst M.A."/>
            <person name="Kaine B.P."/>
            <person name="Borodovsky M."/>
            <person name="Klenk H.-P."/>
            <person name="Fraser C.M."/>
            <person name="Smith H.O."/>
            <person name="Woese C.R."/>
            <person name="Venter J.C."/>
        </authorList>
    </citation>
    <scope>NUCLEOTIDE SEQUENCE [LARGE SCALE GENOMIC DNA]</scope>
    <source>
        <strain>ATCC 43067 / DSM 2661 / JAL-1 / JCM 10045 / NBRC 100440</strain>
    </source>
</reference>
<keyword id="KW-0028">Amino-acid biosynthesis</keyword>
<keyword id="KW-0057">Aromatic amino acid biosynthesis</keyword>
<keyword id="KW-0456">Lyase</keyword>
<keyword id="KW-0663">Pyridoxal phosphate</keyword>
<keyword id="KW-1185">Reference proteome</keyword>
<keyword id="KW-0822">Tryptophan biosynthesis</keyword>
<name>TRPB_METJA</name>
<evidence type="ECO:0000250" key="1"/>
<evidence type="ECO:0000305" key="2"/>
<dbReference type="EC" id="4.2.1.20"/>
<dbReference type="EMBL" id="L77117">
    <property type="protein sequence ID" value="AAB99040.1"/>
    <property type="molecule type" value="Genomic_DNA"/>
</dbReference>
<dbReference type="PIR" id="D64429">
    <property type="entry name" value="D64429"/>
</dbReference>
<dbReference type="SMR" id="Q60179"/>
<dbReference type="FunCoup" id="Q60179">
    <property type="interactions" value="158"/>
</dbReference>
<dbReference type="STRING" id="243232.MJ_1037"/>
<dbReference type="PaxDb" id="243232-MJ_1037"/>
<dbReference type="EnsemblBacteria" id="AAB99040">
    <property type="protein sequence ID" value="AAB99040"/>
    <property type="gene ID" value="MJ_1037"/>
</dbReference>
<dbReference type="KEGG" id="mja:MJ_1037"/>
<dbReference type="eggNOG" id="arCOG01433">
    <property type="taxonomic scope" value="Archaea"/>
</dbReference>
<dbReference type="HOGENOM" id="CLU_016734_3_1_2"/>
<dbReference type="InParanoid" id="Q60179"/>
<dbReference type="PhylomeDB" id="Q60179"/>
<dbReference type="UniPathway" id="UPA00035">
    <property type="reaction ID" value="UER00044"/>
</dbReference>
<dbReference type="Proteomes" id="UP000000805">
    <property type="component" value="Chromosome"/>
</dbReference>
<dbReference type="GO" id="GO:0005737">
    <property type="term" value="C:cytoplasm"/>
    <property type="evidence" value="ECO:0000318"/>
    <property type="project" value="GO_Central"/>
</dbReference>
<dbReference type="GO" id="GO:0004834">
    <property type="term" value="F:tryptophan synthase activity"/>
    <property type="evidence" value="ECO:0007669"/>
    <property type="project" value="UniProtKB-UniRule"/>
</dbReference>
<dbReference type="GO" id="GO:0000162">
    <property type="term" value="P:L-tryptophan biosynthetic process"/>
    <property type="evidence" value="ECO:0000318"/>
    <property type="project" value="GO_Central"/>
</dbReference>
<dbReference type="CDD" id="cd06446">
    <property type="entry name" value="Trp-synth_B"/>
    <property type="match status" value="1"/>
</dbReference>
<dbReference type="FunFam" id="3.40.50.1100:FF:000001">
    <property type="entry name" value="Tryptophan synthase beta chain"/>
    <property type="match status" value="1"/>
</dbReference>
<dbReference type="FunFam" id="3.40.50.1100:FF:000004">
    <property type="entry name" value="Tryptophan synthase beta chain"/>
    <property type="match status" value="1"/>
</dbReference>
<dbReference type="Gene3D" id="3.40.50.1100">
    <property type="match status" value="2"/>
</dbReference>
<dbReference type="HAMAP" id="MF_00133">
    <property type="entry name" value="Trp_synth_beta"/>
    <property type="match status" value="1"/>
</dbReference>
<dbReference type="InterPro" id="IPR006653">
    <property type="entry name" value="Trp_synth_b_CS"/>
</dbReference>
<dbReference type="InterPro" id="IPR006654">
    <property type="entry name" value="Trp_synth_beta"/>
</dbReference>
<dbReference type="InterPro" id="IPR023026">
    <property type="entry name" value="Trp_synth_beta/beta-like"/>
</dbReference>
<dbReference type="InterPro" id="IPR001926">
    <property type="entry name" value="TrpB-like_PALP"/>
</dbReference>
<dbReference type="InterPro" id="IPR036052">
    <property type="entry name" value="TrpB-like_PALP_sf"/>
</dbReference>
<dbReference type="NCBIfam" id="TIGR00263">
    <property type="entry name" value="trpB"/>
    <property type="match status" value="1"/>
</dbReference>
<dbReference type="PANTHER" id="PTHR48077:SF3">
    <property type="entry name" value="TRYPTOPHAN SYNTHASE"/>
    <property type="match status" value="1"/>
</dbReference>
<dbReference type="PANTHER" id="PTHR48077">
    <property type="entry name" value="TRYPTOPHAN SYNTHASE-RELATED"/>
    <property type="match status" value="1"/>
</dbReference>
<dbReference type="Pfam" id="PF00291">
    <property type="entry name" value="PALP"/>
    <property type="match status" value="1"/>
</dbReference>
<dbReference type="PIRSF" id="PIRSF001413">
    <property type="entry name" value="Trp_syn_beta"/>
    <property type="match status" value="1"/>
</dbReference>
<dbReference type="SUPFAM" id="SSF53686">
    <property type="entry name" value="Tryptophan synthase beta subunit-like PLP-dependent enzymes"/>
    <property type="match status" value="1"/>
</dbReference>
<dbReference type="PROSITE" id="PS00168">
    <property type="entry name" value="TRP_SYNTHASE_BETA"/>
    <property type="match status" value="1"/>
</dbReference>